<dbReference type="EC" id="2.7.8.13" evidence="1"/>
<dbReference type="EMBL" id="CP000612">
    <property type="protein sequence ID" value="ABO49211.1"/>
    <property type="molecule type" value="Genomic_DNA"/>
</dbReference>
<dbReference type="RefSeq" id="WP_011877047.1">
    <property type="nucleotide sequence ID" value="NC_009253.1"/>
</dbReference>
<dbReference type="SMR" id="A4J2A8"/>
<dbReference type="STRING" id="349161.Dred_0672"/>
<dbReference type="KEGG" id="drm:Dred_0672"/>
<dbReference type="eggNOG" id="COG0472">
    <property type="taxonomic scope" value="Bacteria"/>
</dbReference>
<dbReference type="HOGENOM" id="CLU_023982_0_1_9"/>
<dbReference type="OrthoDB" id="9805475at2"/>
<dbReference type="UniPathway" id="UPA00219"/>
<dbReference type="Proteomes" id="UP000001556">
    <property type="component" value="Chromosome"/>
</dbReference>
<dbReference type="GO" id="GO:0005886">
    <property type="term" value="C:plasma membrane"/>
    <property type="evidence" value="ECO:0007669"/>
    <property type="project" value="UniProtKB-SubCell"/>
</dbReference>
<dbReference type="GO" id="GO:0046872">
    <property type="term" value="F:metal ion binding"/>
    <property type="evidence" value="ECO:0007669"/>
    <property type="project" value="UniProtKB-KW"/>
</dbReference>
<dbReference type="GO" id="GO:0008963">
    <property type="term" value="F:phospho-N-acetylmuramoyl-pentapeptide-transferase activity"/>
    <property type="evidence" value="ECO:0007669"/>
    <property type="project" value="UniProtKB-UniRule"/>
</dbReference>
<dbReference type="GO" id="GO:0051992">
    <property type="term" value="F:UDP-N-acetylmuramoyl-L-alanyl-D-glutamyl-meso-2,6-diaminopimelyl-D-alanyl-D-alanine:undecaprenyl-phosphate transferase activity"/>
    <property type="evidence" value="ECO:0007669"/>
    <property type="project" value="RHEA"/>
</dbReference>
<dbReference type="GO" id="GO:0051301">
    <property type="term" value="P:cell division"/>
    <property type="evidence" value="ECO:0007669"/>
    <property type="project" value="UniProtKB-KW"/>
</dbReference>
<dbReference type="GO" id="GO:0071555">
    <property type="term" value="P:cell wall organization"/>
    <property type="evidence" value="ECO:0007669"/>
    <property type="project" value="UniProtKB-KW"/>
</dbReference>
<dbReference type="GO" id="GO:0009252">
    <property type="term" value="P:peptidoglycan biosynthetic process"/>
    <property type="evidence" value="ECO:0007669"/>
    <property type="project" value="UniProtKB-UniRule"/>
</dbReference>
<dbReference type="GO" id="GO:0008360">
    <property type="term" value="P:regulation of cell shape"/>
    <property type="evidence" value="ECO:0007669"/>
    <property type="project" value="UniProtKB-KW"/>
</dbReference>
<dbReference type="CDD" id="cd06852">
    <property type="entry name" value="GT_MraY"/>
    <property type="match status" value="1"/>
</dbReference>
<dbReference type="HAMAP" id="MF_00038">
    <property type="entry name" value="MraY"/>
    <property type="match status" value="1"/>
</dbReference>
<dbReference type="InterPro" id="IPR000715">
    <property type="entry name" value="Glycosyl_transferase_4"/>
</dbReference>
<dbReference type="InterPro" id="IPR003524">
    <property type="entry name" value="PNAcMuramoyl-5peptid_Trfase"/>
</dbReference>
<dbReference type="InterPro" id="IPR018480">
    <property type="entry name" value="PNAcMuramoyl-5peptid_Trfase_CS"/>
</dbReference>
<dbReference type="NCBIfam" id="TIGR00445">
    <property type="entry name" value="mraY"/>
    <property type="match status" value="1"/>
</dbReference>
<dbReference type="PANTHER" id="PTHR22926">
    <property type="entry name" value="PHOSPHO-N-ACETYLMURAMOYL-PENTAPEPTIDE-TRANSFERASE"/>
    <property type="match status" value="1"/>
</dbReference>
<dbReference type="PANTHER" id="PTHR22926:SF5">
    <property type="entry name" value="PHOSPHO-N-ACETYLMURAMOYL-PENTAPEPTIDE-TRANSFERASE HOMOLOG"/>
    <property type="match status" value="1"/>
</dbReference>
<dbReference type="Pfam" id="PF00953">
    <property type="entry name" value="Glycos_transf_4"/>
    <property type="match status" value="1"/>
</dbReference>
<dbReference type="PROSITE" id="PS01347">
    <property type="entry name" value="MRAY_1"/>
    <property type="match status" value="1"/>
</dbReference>
<dbReference type="PROSITE" id="PS01348">
    <property type="entry name" value="MRAY_2"/>
    <property type="match status" value="1"/>
</dbReference>
<gene>
    <name evidence="1" type="primary">mraY</name>
    <name type="ordered locus">Dred_0672</name>
</gene>
<keyword id="KW-0131">Cell cycle</keyword>
<keyword id="KW-0132">Cell division</keyword>
<keyword id="KW-1003">Cell membrane</keyword>
<keyword id="KW-0133">Cell shape</keyword>
<keyword id="KW-0961">Cell wall biogenesis/degradation</keyword>
<keyword id="KW-0460">Magnesium</keyword>
<keyword id="KW-0472">Membrane</keyword>
<keyword id="KW-0479">Metal-binding</keyword>
<keyword id="KW-0573">Peptidoglycan synthesis</keyword>
<keyword id="KW-1185">Reference proteome</keyword>
<keyword id="KW-0808">Transferase</keyword>
<keyword id="KW-0812">Transmembrane</keyword>
<keyword id="KW-1133">Transmembrane helix</keyword>
<proteinExistence type="inferred from homology"/>
<accession>A4J2A8</accession>
<name>MRAY_DESRM</name>
<sequence length="334" mass="35657">MDYTVVWLAAGISFLVTLVLGPVTIPLLQRLKFGQTIRAEGPAAHMAKTGTPTMGGIMFLIGIAVAGAVLLVSNIPGRAEGLVVLAVTLGYGLIGFLDDFIKVVLKRNLGLKAREKILGQLVFATVLAVVAVFKLGRGTDYIIPFSSGISFDLGWWPFFFLTLFVLLGTSNGVNLTDGLDGLASGATVFTATAFAILALVTGKIGLAIVLAAVVGGCLGFLFYNRHPAKVFMGDTGSLALGGALGAGAVVTRNELLLVVIGGLYVLETLSVIIQVISFKTTGRRVFRMSPLHHHFELSGWSERKVVRNFWLLSFLFSLVGLLGAQDFWLWLSNR</sequence>
<reference key="1">
    <citation type="submission" date="2007-03" db="EMBL/GenBank/DDBJ databases">
        <title>Complete sequence of Desulfotomaculum reducens MI-1.</title>
        <authorList>
            <consortium name="US DOE Joint Genome Institute"/>
            <person name="Copeland A."/>
            <person name="Lucas S."/>
            <person name="Lapidus A."/>
            <person name="Barry K."/>
            <person name="Detter J.C."/>
            <person name="Glavina del Rio T."/>
            <person name="Hammon N."/>
            <person name="Israni S."/>
            <person name="Dalin E."/>
            <person name="Tice H."/>
            <person name="Pitluck S."/>
            <person name="Sims D."/>
            <person name="Brettin T."/>
            <person name="Bruce D."/>
            <person name="Han C."/>
            <person name="Tapia R."/>
            <person name="Schmutz J."/>
            <person name="Larimer F."/>
            <person name="Land M."/>
            <person name="Hauser L."/>
            <person name="Kyrpides N."/>
            <person name="Kim E."/>
            <person name="Tebo B.M."/>
            <person name="Richardson P."/>
        </authorList>
    </citation>
    <scope>NUCLEOTIDE SEQUENCE [LARGE SCALE GENOMIC DNA]</scope>
    <source>
        <strain>ATCC BAA-1160 / DSM 100696 / MI-1</strain>
    </source>
</reference>
<evidence type="ECO:0000255" key="1">
    <source>
        <dbReference type="HAMAP-Rule" id="MF_00038"/>
    </source>
</evidence>
<organism>
    <name type="scientific">Desulforamulus reducens (strain ATCC BAA-1160 / DSM 100696 / MI-1)</name>
    <name type="common">Desulfotomaculum reducens</name>
    <dbReference type="NCBI Taxonomy" id="349161"/>
    <lineage>
        <taxon>Bacteria</taxon>
        <taxon>Bacillati</taxon>
        <taxon>Bacillota</taxon>
        <taxon>Clostridia</taxon>
        <taxon>Eubacteriales</taxon>
        <taxon>Peptococcaceae</taxon>
        <taxon>Desulforamulus</taxon>
    </lineage>
</organism>
<protein>
    <recommendedName>
        <fullName evidence="1">Phospho-N-acetylmuramoyl-pentapeptide-transferase</fullName>
        <ecNumber evidence="1">2.7.8.13</ecNumber>
    </recommendedName>
    <alternativeName>
        <fullName evidence="1">UDP-MurNAc-pentapeptide phosphotransferase</fullName>
    </alternativeName>
</protein>
<comment type="function">
    <text evidence="1">Catalyzes the initial step of the lipid cycle reactions in the biosynthesis of the cell wall peptidoglycan: transfers peptidoglycan precursor phospho-MurNAc-pentapeptide from UDP-MurNAc-pentapeptide onto the lipid carrier undecaprenyl phosphate, yielding undecaprenyl-pyrophosphoryl-MurNAc-pentapeptide, known as lipid I.</text>
</comment>
<comment type="catalytic activity">
    <reaction evidence="1">
        <text>UDP-N-acetyl-alpha-D-muramoyl-L-alanyl-gamma-D-glutamyl-meso-2,6-diaminopimeloyl-D-alanyl-D-alanine + di-trans,octa-cis-undecaprenyl phosphate = di-trans,octa-cis-undecaprenyl diphospho-N-acetyl-alpha-D-muramoyl-L-alanyl-D-glutamyl-meso-2,6-diaminopimeloyl-D-alanyl-D-alanine + UMP</text>
        <dbReference type="Rhea" id="RHEA:28386"/>
        <dbReference type="ChEBI" id="CHEBI:57865"/>
        <dbReference type="ChEBI" id="CHEBI:60392"/>
        <dbReference type="ChEBI" id="CHEBI:61386"/>
        <dbReference type="ChEBI" id="CHEBI:61387"/>
        <dbReference type="EC" id="2.7.8.13"/>
    </reaction>
</comment>
<comment type="cofactor">
    <cofactor evidence="1">
        <name>Mg(2+)</name>
        <dbReference type="ChEBI" id="CHEBI:18420"/>
    </cofactor>
</comment>
<comment type="pathway">
    <text evidence="1">Cell wall biogenesis; peptidoglycan biosynthesis.</text>
</comment>
<comment type="subcellular location">
    <subcellularLocation>
        <location evidence="1">Cell membrane</location>
        <topology evidence="1">Multi-pass membrane protein</topology>
    </subcellularLocation>
</comment>
<comment type="similarity">
    <text evidence="1">Belongs to the glycosyltransferase 4 family. MraY subfamily.</text>
</comment>
<feature type="chain" id="PRO_1000090621" description="Phospho-N-acetylmuramoyl-pentapeptide-transferase">
    <location>
        <begin position="1"/>
        <end position="334"/>
    </location>
</feature>
<feature type="transmembrane region" description="Helical" evidence="1">
    <location>
        <begin position="5"/>
        <end position="25"/>
    </location>
</feature>
<feature type="transmembrane region" description="Helical" evidence="1">
    <location>
        <begin position="52"/>
        <end position="72"/>
    </location>
</feature>
<feature type="transmembrane region" description="Helical" evidence="1">
    <location>
        <begin position="81"/>
        <end position="101"/>
    </location>
</feature>
<feature type="transmembrane region" description="Helical" evidence="1">
    <location>
        <begin position="116"/>
        <end position="136"/>
    </location>
</feature>
<feature type="transmembrane region" description="Helical" evidence="1">
    <location>
        <begin position="148"/>
        <end position="168"/>
    </location>
</feature>
<feature type="transmembrane region" description="Helical" evidence="1">
    <location>
        <begin position="181"/>
        <end position="200"/>
    </location>
</feature>
<feature type="transmembrane region" description="Helical" evidence="1">
    <location>
        <begin position="230"/>
        <end position="250"/>
    </location>
</feature>
<feature type="transmembrane region" description="Helical" evidence="1">
    <location>
        <begin position="256"/>
        <end position="276"/>
    </location>
</feature>
<feature type="transmembrane region" description="Helical" evidence="1">
    <location>
        <begin position="309"/>
        <end position="329"/>
    </location>
</feature>